<gene>
    <name evidence="3" type="primary">iacA</name>
    <name evidence="5" type="ORF">HMPREF0010_00467</name>
</gene>
<keyword id="KW-0503">Monooxygenase</keyword>
<keyword id="KW-0520">NAD</keyword>
<keyword id="KW-0560">Oxidoreductase</keyword>
<keyword id="KW-1185">Reference proteome</keyword>
<dbReference type="EC" id="1.14.13.235" evidence="1"/>
<dbReference type="EMBL" id="GG704572">
    <property type="protein sequence ID" value="EEX04702.1"/>
    <property type="molecule type" value="Genomic_DNA"/>
</dbReference>
<dbReference type="SMR" id="D0C6T7"/>
<dbReference type="BioCyc" id="ABAU575584-HMP:GM69-472-MONOMER"/>
<dbReference type="Proteomes" id="UP000005740">
    <property type="component" value="Unassembled WGS sequence"/>
</dbReference>
<dbReference type="GO" id="GO:0005737">
    <property type="term" value="C:cytoplasm"/>
    <property type="evidence" value="ECO:0007669"/>
    <property type="project" value="TreeGrafter"/>
</dbReference>
<dbReference type="GO" id="GO:0003995">
    <property type="term" value="F:acyl-CoA dehydrogenase activity"/>
    <property type="evidence" value="ECO:0007669"/>
    <property type="project" value="TreeGrafter"/>
</dbReference>
<dbReference type="GO" id="GO:0050660">
    <property type="term" value="F:flavin adenine dinucleotide binding"/>
    <property type="evidence" value="ECO:0007669"/>
    <property type="project" value="InterPro"/>
</dbReference>
<dbReference type="GO" id="GO:0004497">
    <property type="term" value="F:monooxygenase activity"/>
    <property type="evidence" value="ECO:0007669"/>
    <property type="project" value="UniProtKB-KW"/>
</dbReference>
<dbReference type="GO" id="GO:0033539">
    <property type="term" value="P:fatty acid beta-oxidation using acyl-CoA dehydrogenase"/>
    <property type="evidence" value="ECO:0007669"/>
    <property type="project" value="TreeGrafter"/>
</dbReference>
<dbReference type="Gene3D" id="1.10.540.10">
    <property type="entry name" value="Acyl-CoA dehydrogenase/oxidase, N-terminal domain"/>
    <property type="match status" value="1"/>
</dbReference>
<dbReference type="Gene3D" id="2.40.110.10">
    <property type="entry name" value="Butyryl-CoA Dehydrogenase, subunit A, domain 2"/>
    <property type="match status" value="1"/>
</dbReference>
<dbReference type="Gene3D" id="1.20.140.10">
    <property type="entry name" value="Butyryl-CoA Dehydrogenase, subunit A, domain 3"/>
    <property type="match status" value="1"/>
</dbReference>
<dbReference type="InterPro" id="IPR050741">
    <property type="entry name" value="Acyl-CoA_dehydrogenase"/>
</dbReference>
<dbReference type="InterPro" id="IPR013107">
    <property type="entry name" value="Acyl-CoA_DH_C"/>
</dbReference>
<dbReference type="InterPro" id="IPR046373">
    <property type="entry name" value="Acyl-CoA_Oxase/DH_mid-dom_sf"/>
</dbReference>
<dbReference type="InterPro" id="IPR036250">
    <property type="entry name" value="AcylCo_DH-like_C"/>
</dbReference>
<dbReference type="InterPro" id="IPR013786">
    <property type="entry name" value="AcylCoA_DH/ox_N"/>
</dbReference>
<dbReference type="InterPro" id="IPR037069">
    <property type="entry name" value="AcylCoA_DH/ox_N_sf"/>
</dbReference>
<dbReference type="InterPro" id="IPR009100">
    <property type="entry name" value="AcylCoA_DH/oxidase_NM_dom_sf"/>
</dbReference>
<dbReference type="PANTHER" id="PTHR48083">
    <property type="entry name" value="MEDIUM-CHAIN SPECIFIC ACYL-COA DEHYDROGENASE, MITOCHONDRIAL-RELATED"/>
    <property type="match status" value="1"/>
</dbReference>
<dbReference type="PANTHER" id="PTHR48083:SF5">
    <property type="entry name" value="NRGC PROTEIN"/>
    <property type="match status" value="1"/>
</dbReference>
<dbReference type="Pfam" id="PF08028">
    <property type="entry name" value="Acyl-CoA_dh_2"/>
    <property type="match status" value="1"/>
</dbReference>
<dbReference type="Pfam" id="PF02771">
    <property type="entry name" value="Acyl-CoA_dh_N"/>
    <property type="match status" value="1"/>
</dbReference>
<dbReference type="PIRSF" id="PIRSF016578">
    <property type="entry name" value="HsaA"/>
    <property type="match status" value="1"/>
</dbReference>
<dbReference type="SUPFAM" id="SSF47203">
    <property type="entry name" value="Acyl-CoA dehydrogenase C-terminal domain-like"/>
    <property type="match status" value="1"/>
</dbReference>
<dbReference type="SUPFAM" id="SSF56645">
    <property type="entry name" value="Acyl-CoA dehydrogenase NM domain-like"/>
    <property type="match status" value="1"/>
</dbReference>
<name>IACA_ACIB2</name>
<sequence>MMNKLSKMEFAAQDKAVDLDALCQEIRERACAGEFDNQAYVSQDIIEKLKKIGVYRALVPKRFGGEEWSPRQFCELIETLSKADGSVGWVASFGMSPAYLGSLPEETLKELYQNGPDVVFAGGIFPPQPAEITDEGVVVRGRWKFSSGCMGADIVGVGISPLKNNEMQGLPRMAVMPANKAKIEMTWDTVGLKGTGSHDLVVEDVLVEKKWTFVRGEPSKLSEPFFKYPSLSLATQVLTVVGIGVAAAALEEFEKLAPGKASITGGSEIANRPVTQYEFAQADAEFQAAKSWFYQTMDIVWNEIIAGREATAEQISDMRLACTHAARVCAKVTRKMQMLAGMTAIYTNNPFSRFVNDTNVVTQHAFMGDATLQNAGLVSFGLKPAPGYL</sequence>
<organism>
    <name type="scientific">Acinetobacter baumannii (strain ATCC 19606 / DSM 30007 / JCM 6841 / CCUG 19606 / CIP 70.34 / NBRC 109757 / NCIMB 12457 / NCTC 12156 / 81)</name>
    <dbReference type="NCBI Taxonomy" id="575584"/>
    <lineage>
        <taxon>Bacteria</taxon>
        <taxon>Pseudomonadati</taxon>
        <taxon>Pseudomonadota</taxon>
        <taxon>Gammaproteobacteria</taxon>
        <taxon>Moraxellales</taxon>
        <taxon>Moraxellaceae</taxon>
        <taxon>Acinetobacter</taxon>
        <taxon>Acinetobacter calcoaceticus/baumannii complex</taxon>
    </lineage>
</organism>
<evidence type="ECO:0000250" key="1">
    <source>
        <dbReference type="UniProtKB" id="B0FXI0"/>
    </source>
</evidence>
<evidence type="ECO:0000269" key="2">
    <source>
    </source>
</evidence>
<evidence type="ECO:0000303" key="3">
    <source>
    </source>
</evidence>
<evidence type="ECO:0000305" key="4"/>
<evidence type="ECO:0000312" key="5">
    <source>
        <dbReference type="EMBL" id="EEX04702.1"/>
    </source>
</evidence>
<protein>
    <recommendedName>
        <fullName evidence="4">Indole-3-acetate monooxygenase</fullName>
        <ecNumber evidence="1">1.14.13.235</ecNumber>
    </recommendedName>
</protein>
<comment type="function">
    <text evidence="1 2">Involved in the degradation of the plant hormone indole-3-acetic acid (IAA) (PubMed:22311185). Catalyzes the first step of the pathway, the conversion of IAA to 2-hydroxy-IAA (2-OH-IAA) (By similarity). Can also convert indole to indoxyl, which spontaneously dimerizes in the presence of oxygen to form the blue pigment indigo (PubMed:22311185).</text>
</comment>
<comment type="catalytic activity">
    <reaction evidence="1">
        <text>(indol-3-yl)acetate + NADH + O2 + H(+) = 2-hydroxy-(1H-indol-3-yl)acetate + NAD(+) + H2O</text>
        <dbReference type="Rhea" id="RHEA:41211"/>
        <dbReference type="ChEBI" id="CHEBI:15377"/>
        <dbReference type="ChEBI" id="CHEBI:15378"/>
        <dbReference type="ChEBI" id="CHEBI:15379"/>
        <dbReference type="ChEBI" id="CHEBI:30854"/>
        <dbReference type="ChEBI" id="CHEBI:57540"/>
        <dbReference type="ChEBI" id="CHEBI:57945"/>
        <dbReference type="ChEBI" id="CHEBI:136436"/>
        <dbReference type="EC" id="1.14.13.235"/>
    </reaction>
    <physiologicalReaction direction="left-to-right" evidence="1">
        <dbReference type="Rhea" id="RHEA:41212"/>
    </physiologicalReaction>
</comment>
<comment type="catalytic activity">
    <reaction evidence="2">
        <text>indole + NADH + O2 + H(+) = indoxyl + NAD(+) + H2O</text>
        <dbReference type="Rhea" id="RHEA:52836"/>
        <dbReference type="ChEBI" id="CHEBI:15377"/>
        <dbReference type="ChEBI" id="CHEBI:15378"/>
        <dbReference type="ChEBI" id="CHEBI:15379"/>
        <dbReference type="ChEBI" id="CHEBI:16881"/>
        <dbReference type="ChEBI" id="CHEBI:17840"/>
        <dbReference type="ChEBI" id="CHEBI:57540"/>
        <dbReference type="ChEBI" id="CHEBI:57945"/>
    </reaction>
    <physiologicalReaction direction="left-to-right" evidence="2">
        <dbReference type="Rhea" id="RHEA:52837"/>
    </physiologicalReaction>
</comment>
<comment type="biophysicochemical properties">
    <kinetics>
        <KM evidence="2">0.8 mM for indole</KM>
        <KM evidence="2">0.25 mM for NADH</KM>
        <text evidence="2">kcat is 0.88 min(-1) with indole as substrate.</text>
    </kinetics>
    <phDependence>
        <text evidence="2">Optimum pH is 8.5.</text>
    </phDependence>
</comment>
<comment type="induction">
    <text evidence="2">Induced in the presence of IAA.</text>
</comment>
<comment type="disruption phenotype">
    <text evidence="2">Mutant cannot grow with IAA as the sole carbon source.</text>
</comment>
<comment type="similarity">
    <text evidence="4">Belongs to the HpaH/HsaA monooxygenase family.</text>
</comment>
<feature type="chain" id="PRO_0000454113" description="Indole-3-acetate monooxygenase">
    <location>
        <begin position="1"/>
        <end position="389"/>
    </location>
</feature>
<proteinExistence type="evidence at protein level"/>
<accession>D0C6T7</accession>
<reference key="1">
    <citation type="journal article" date="2012" name="PLoS ONE">
        <title>The success of Acinetobacter species; genetic, metabolic and virulence attributes.</title>
        <authorList>
            <person name="Peleg A.Y."/>
            <person name="de Breij A."/>
            <person name="Adams M.D."/>
            <person name="Cerqueira G.M."/>
            <person name="Mocali S."/>
            <person name="Galardini M."/>
            <person name="Nibbering P.H."/>
            <person name="Earl A.M."/>
            <person name="Ward D.V."/>
            <person name="Paterson D.L."/>
            <person name="Seifert H."/>
            <person name="Dijkshoorn L."/>
        </authorList>
    </citation>
    <scope>NUCLEOTIDE SEQUENCE [LARGE SCALE GENOMIC DNA]</scope>
    <source>
        <strain>ATCC 19606 / DSM 30007 / JCM 6841 / CCUG 19606 / CIP 70.34 / NBRC 109757 / NCIMB 12457 / NCTC 12156 / 81</strain>
    </source>
</reference>
<reference key="2">
    <citation type="journal article" date="2012" name="Antonie Van Leeuwenhoek">
        <title>Identification and characterization of an indigo-producing oxygenase involved in indole 3-acetic acid utilization by Acinetobacter baumannii.</title>
        <authorList>
            <person name="Lin G.H."/>
            <person name="Chen H.P."/>
            <person name="Huang J.H."/>
            <person name="Liu T.T."/>
            <person name="Lin T.K."/>
            <person name="Wang S.J."/>
            <person name="Tseng C.H."/>
            <person name="Shu H.Y."/>
        </authorList>
    </citation>
    <scope>FUNCTION</scope>
    <scope>CATALYTIC ACTIVITY</scope>
    <scope>BIOPHYSICOCHEMICAL PROPERTIES</scope>
    <scope>INDUCTION</scope>
    <scope>DISRUPTION PHENOTYPE</scope>
    <source>
        <strain>ATCC 19606 / DSM 30007 / JCM 6841 / CCUG 19606 / CIP 70.34 / NBRC 109757 / NCIMB 12457 / NCTC 12156 / 81</strain>
    </source>
</reference>